<dbReference type="EC" id="1.7.3.3"/>
<dbReference type="EMBL" id="U72663">
    <property type="protein sequence ID" value="AAB97726.1"/>
    <property type="molecule type" value="mRNA"/>
</dbReference>
<dbReference type="EMBL" id="S75621">
    <property type="protein sequence ID" value="AAB33324.2"/>
    <property type="molecule type" value="mRNA"/>
</dbReference>
<dbReference type="PIR" id="T12074">
    <property type="entry name" value="T12074"/>
</dbReference>
<dbReference type="SMR" id="P53763"/>
<dbReference type="ProMEX" id="P53763"/>
<dbReference type="eggNOG" id="KOG1599">
    <property type="taxonomic scope" value="Eukaryota"/>
</dbReference>
<dbReference type="UniPathway" id="UPA00394">
    <property type="reaction ID" value="UER00650"/>
</dbReference>
<dbReference type="GO" id="GO:0005777">
    <property type="term" value="C:peroxisome"/>
    <property type="evidence" value="ECO:0007669"/>
    <property type="project" value="UniProtKB-SubCell"/>
</dbReference>
<dbReference type="GO" id="GO:0004846">
    <property type="term" value="F:urate oxidase activity"/>
    <property type="evidence" value="ECO:0007669"/>
    <property type="project" value="UniProtKB-EC"/>
</dbReference>
<dbReference type="GO" id="GO:0009877">
    <property type="term" value="P:nodulation"/>
    <property type="evidence" value="ECO:0007669"/>
    <property type="project" value="UniProtKB-KW"/>
</dbReference>
<dbReference type="GO" id="GO:0006145">
    <property type="term" value="P:purine nucleobase catabolic process"/>
    <property type="evidence" value="ECO:0007669"/>
    <property type="project" value="TreeGrafter"/>
</dbReference>
<dbReference type="GO" id="GO:0019628">
    <property type="term" value="P:urate catabolic process"/>
    <property type="evidence" value="ECO:0007669"/>
    <property type="project" value="UniProtKB-UniPathway"/>
</dbReference>
<dbReference type="CDD" id="cd00445">
    <property type="entry name" value="Uricase"/>
    <property type="match status" value="1"/>
</dbReference>
<dbReference type="FunFam" id="3.10.270.10:FF:000001">
    <property type="entry name" value="Uricase"/>
    <property type="match status" value="1"/>
</dbReference>
<dbReference type="Gene3D" id="3.10.270.10">
    <property type="entry name" value="Urate Oxidase"/>
    <property type="match status" value="1"/>
</dbReference>
<dbReference type="InterPro" id="IPR002042">
    <property type="entry name" value="Uricase"/>
</dbReference>
<dbReference type="InterPro" id="IPR019842">
    <property type="entry name" value="Uricase_CS"/>
</dbReference>
<dbReference type="NCBIfam" id="TIGR03383">
    <property type="entry name" value="urate_oxi"/>
    <property type="match status" value="1"/>
</dbReference>
<dbReference type="PANTHER" id="PTHR42874">
    <property type="entry name" value="URICASE"/>
    <property type="match status" value="1"/>
</dbReference>
<dbReference type="PANTHER" id="PTHR42874:SF1">
    <property type="entry name" value="URICASE"/>
    <property type="match status" value="1"/>
</dbReference>
<dbReference type="Pfam" id="PF01014">
    <property type="entry name" value="Uricase"/>
    <property type="match status" value="2"/>
</dbReference>
<dbReference type="PIRSF" id="PIRSF000241">
    <property type="entry name" value="Urate_oxidase"/>
    <property type="match status" value="1"/>
</dbReference>
<dbReference type="PRINTS" id="PR00093">
    <property type="entry name" value="URICASE"/>
</dbReference>
<dbReference type="SUPFAM" id="SSF55620">
    <property type="entry name" value="Tetrahydrobiopterin biosynthesis enzymes-like"/>
    <property type="match status" value="2"/>
</dbReference>
<dbReference type="PROSITE" id="PS00366">
    <property type="entry name" value="URICASE"/>
    <property type="match status" value="1"/>
</dbReference>
<reference key="1">
    <citation type="journal article" date="1997" name="Plant Physiol.">
        <title>Characterization of the common bean uricase II and its expression in organs other than nodules.</title>
        <authorList>
            <person name="Capote-Mainez N."/>
            <person name="Sanchez F."/>
        </authorList>
    </citation>
    <scope>NUCLEOTIDE SEQUENCE [MRNA]</scope>
    <scope>TISSUE SPECIFICITY</scope>
    <scope>DEVELOPMENTAL STAGE</scope>
    <source>
        <strain>cv. Negro Jamapa</strain>
        <tissue>Root nodule</tissue>
    </source>
</reference>
<reference key="2">
    <citation type="journal article" date="1995" name="Experientia">
        <title>Expression pattern of uricase II gene during root nodule development in Phaseolus vulgaris.</title>
        <authorList>
            <person name="Papadopoulou K."/>
            <person name="Roussis A."/>
            <person name="Kuin H."/>
            <person name="Katinakis P."/>
        </authorList>
    </citation>
    <scope>NUCLEOTIDE SEQUENCE [MRNA] OF 54-308</scope>
    <source>
        <strain>cv. Tendergreen</strain>
        <tissue>Root nodule</tissue>
    </source>
</reference>
<reference key="3">
    <citation type="journal article" date="1987" name="Plant Physiol.">
        <title>Purification, cDNA cloning, and developmental expression of the nodule-specific uricase from Phaseolus vulgaris L.</title>
        <authorList>
            <person name="Sanchez F."/>
            <person name="Campos F."/>
            <person name="Padilla J."/>
            <person name="Bonneville J.-M."/>
            <person name="Enriquez C."/>
            <person name="Caput D."/>
        </authorList>
    </citation>
    <scope>CHARACTERIZATION</scope>
    <scope>INDUCTION</scope>
    <source>
        <strain>cv. Negro Jamapa</strain>
        <tissue>Root nodule</tissue>
    </source>
</reference>
<protein>
    <recommendedName>
        <fullName>Uricase-2</fullName>
        <ecNumber>1.7.3.3</ecNumber>
    </recommendedName>
    <alternativeName>
        <fullName>Nodule-specific uricase</fullName>
    </alternativeName>
    <alternativeName>
        <fullName>Urate oxidase</fullName>
    </alternativeName>
    <alternativeName>
        <fullName>Uricase II</fullName>
    </alternativeName>
</protein>
<comment type="function">
    <text>Catalyzes the oxidation of uric acid to 5-hydroxyisourate, which is further processed to form (S)-allantoin.</text>
</comment>
<comment type="catalytic activity">
    <reaction>
        <text>urate + O2 + H2O = 5-hydroxyisourate + H2O2</text>
        <dbReference type="Rhea" id="RHEA:21368"/>
        <dbReference type="ChEBI" id="CHEBI:15377"/>
        <dbReference type="ChEBI" id="CHEBI:15379"/>
        <dbReference type="ChEBI" id="CHEBI:16240"/>
        <dbReference type="ChEBI" id="CHEBI:17775"/>
        <dbReference type="ChEBI" id="CHEBI:18072"/>
        <dbReference type="EC" id="1.7.3.3"/>
    </reaction>
</comment>
<comment type="pathway">
    <text>Purine metabolism; urate degradation; (S)-allantoin from urate: step 1/3.</text>
</comment>
<comment type="subunit">
    <text evidence="1">Homotetramer.</text>
</comment>
<comment type="subcellular location">
    <subcellularLocation>
        <location>Peroxisome</location>
    </subcellularLocation>
</comment>
<comment type="tissue specificity">
    <text evidence="6">Expressed predominantly in the uninfected cells of the central tissue of the root nodule. Also expressed in the nodule parenchyma cells and vascular tissue, in the roots, stems and leaves of uninfected adult plants, and in the cotyledons, roots and hypocotyls of developing seedlings. Localized to the metaxylem parenchyma cells and phloem fibers of developing roots.</text>
</comment>
<comment type="developmental stage">
    <text evidence="6">Detected in cotyledons and roots at 1 day postimbibition, reaching a maximum at 4 days postimbibition. Hypocotyl levels are constant from 3 to 10 days postimbibition.</text>
</comment>
<comment type="induction">
    <text evidence="5">In root nodules after infection by Rhizobium. Nodule uricase II levels increase from 11 to around 25 days after inoculation, then fall slightly.</text>
</comment>
<comment type="similarity">
    <text evidence="7">Belongs to the uricase family.</text>
</comment>
<evidence type="ECO:0000250" key="1"/>
<evidence type="ECO:0000250" key="2">
    <source>
        <dbReference type="UniProtKB" id="D0VWQ1"/>
    </source>
</evidence>
<evidence type="ECO:0000250" key="3">
    <source>
        <dbReference type="UniProtKB" id="Q00511"/>
    </source>
</evidence>
<evidence type="ECO:0000255" key="4"/>
<evidence type="ECO:0000269" key="5">
    <source>
    </source>
</evidence>
<evidence type="ECO:0000269" key="6">
    <source>
    </source>
</evidence>
<evidence type="ECO:0000305" key="7"/>
<organism>
    <name type="scientific">Phaseolus vulgaris</name>
    <name type="common">Kidney bean</name>
    <name type="synonym">French bean</name>
    <dbReference type="NCBI Taxonomy" id="3885"/>
    <lineage>
        <taxon>Eukaryota</taxon>
        <taxon>Viridiplantae</taxon>
        <taxon>Streptophyta</taxon>
        <taxon>Embryophyta</taxon>
        <taxon>Tracheophyta</taxon>
        <taxon>Spermatophyta</taxon>
        <taxon>Magnoliopsida</taxon>
        <taxon>eudicotyledons</taxon>
        <taxon>Gunneridae</taxon>
        <taxon>Pentapetalae</taxon>
        <taxon>rosids</taxon>
        <taxon>fabids</taxon>
        <taxon>Fabales</taxon>
        <taxon>Fabaceae</taxon>
        <taxon>Papilionoideae</taxon>
        <taxon>50 kb inversion clade</taxon>
        <taxon>NPAAA clade</taxon>
        <taxon>indigoferoid/millettioid clade</taxon>
        <taxon>Phaseoleae</taxon>
        <taxon>Phaseolus</taxon>
    </lineage>
</organism>
<feature type="chain" id="PRO_0000166002" description="Uricase-2">
    <location>
        <begin position="1"/>
        <end position="308"/>
    </location>
</feature>
<feature type="short sequence motif" description="Microbody targeting signal" evidence="4">
    <location>
        <begin position="306"/>
        <end position="308"/>
    </location>
</feature>
<feature type="active site" description="Charge relay system" evidence="2">
    <location>
        <position position="17"/>
    </location>
</feature>
<feature type="active site" description="Charge relay system" evidence="2">
    <location>
        <position position="63"/>
    </location>
</feature>
<feature type="active site" description="Charge relay system" evidence="2">
    <location>
        <position position="266"/>
    </location>
</feature>
<feature type="binding site" evidence="3">
    <location>
        <position position="63"/>
    </location>
    <ligand>
        <name>urate</name>
        <dbReference type="ChEBI" id="CHEBI:17775"/>
    </ligand>
</feature>
<feature type="binding site" evidence="3">
    <location>
        <position position="64"/>
    </location>
    <ligand>
        <name>urate</name>
        <dbReference type="ChEBI" id="CHEBI:17775"/>
    </ligand>
</feature>
<feature type="binding site" evidence="3">
    <location>
        <position position="165"/>
    </location>
    <ligand>
        <name>urate</name>
        <dbReference type="ChEBI" id="CHEBI:17775"/>
    </ligand>
</feature>
<feature type="binding site" evidence="3">
    <location>
        <position position="182"/>
    </location>
    <ligand>
        <name>urate</name>
        <dbReference type="ChEBI" id="CHEBI:17775"/>
    </ligand>
</feature>
<feature type="binding site" evidence="3">
    <location>
        <position position="237"/>
    </location>
    <ligand>
        <name>urate</name>
        <dbReference type="ChEBI" id="CHEBI:17775"/>
    </ligand>
</feature>
<feature type="binding site" evidence="3">
    <location>
        <position position="238"/>
    </location>
    <ligand>
        <name>urate</name>
        <dbReference type="ChEBI" id="CHEBI:17775"/>
    </ligand>
</feature>
<feature type="binding site" evidence="3">
    <location>
        <position position="264"/>
    </location>
    <ligand>
        <name>urate</name>
        <dbReference type="ChEBI" id="CHEBI:17775"/>
    </ligand>
</feature>
<feature type="sequence conflict" description="In Ref. 2; AAB33324." evidence="7" ref="2">
    <location>
        <position position="81"/>
    </location>
</feature>
<feature type="sequence conflict" description="In Ref. 2; AAB33324." evidence="7" ref="2">
    <original>V</original>
    <variation>L</variation>
    <location>
        <position position="140"/>
    </location>
</feature>
<feature type="sequence conflict" description="In Ref. 2; AAB33324." evidence="7" ref="2">
    <original>G</original>
    <variation>C</variation>
    <location>
        <position position="144"/>
    </location>
</feature>
<feature type="sequence conflict" description="In Ref. 2; AAB33324." evidence="7" ref="2">
    <original>N</original>
    <variation>D</variation>
    <location>
        <position position="171"/>
    </location>
</feature>
<feature type="sequence conflict" description="In Ref. 2; AAB33324." evidence="7" ref="2">
    <original>PNR</original>
    <variation>TKQ</variation>
    <location>
        <begin position="228"/>
        <end position="230"/>
    </location>
</feature>
<feature type="sequence conflict" description="In Ref. 2; AAB33324." evidence="7" ref="2">
    <original>V</original>
    <variation>C</variation>
    <location>
        <position position="258"/>
    </location>
</feature>
<feature type="sequence conflict" description="In Ref. 2." evidence="7" ref="2">
    <original>SRVWSK</original>
    <variation>LQLFYIL</variation>
    <location>
        <begin position="302"/>
        <end position="307"/>
    </location>
</feature>
<accession>P53763</accession>
<accession>O49966</accession>
<sequence>MAQEVVEGFKFEQRHGKERVRVARVWRTPQGRHFVVEWRVGITLFSDCVNSYLRDDNSDIVATDTMKNTVYAKAKECSDILSVEDFAILLAKHFVSFYKKVTGAIVNIVEKPWERVIVDGQPHQHGFTLGSEKHTTEAIVQKSGSLQLTSGIEGLSVLKTTQSGFENFIRNKYTALPDTRERILATEVTALWRYSYESLYNLPQKPLYFTDKYLEVKKVLADTFFGPPNRGVYSPSVQNTLYLMAKATLNRFPDIAYVHLKMPNLHFLPVNISSKDGPIVKFEDDVYLPTDEPHGSIEASLSRVWSKL</sequence>
<keyword id="KW-0536">Nodulation</keyword>
<keyword id="KW-0560">Oxidoreductase</keyword>
<keyword id="KW-0576">Peroxisome</keyword>
<keyword id="KW-0659">Purine metabolism</keyword>
<name>URIC_PHAVU</name>
<proteinExistence type="evidence at protein level"/>
<gene>
    <name type="primary">URIII</name>
</gene>